<proteinExistence type="inferred from homology"/>
<evidence type="ECO:0000255" key="1">
    <source>
        <dbReference type="HAMAP-Rule" id="MF_01197"/>
    </source>
</evidence>
<evidence type="ECO:0000256" key="2">
    <source>
        <dbReference type="SAM" id="MobiDB-lite"/>
    </source>
</evidence>
<dbReference type="EMBL" id="CP000023">
    <property type="protein sequence ID" value="AAV60430.1"/>
    <property type="molecule type" value="Genomic_DNA"/>
</dbReference>
<dbReference type="RefSeq" id="WP_011225780.1">
    <property type="nucleotide sequence ID" value="NC_006448.1"/>
</dbReference>
<dbReference type="SMR" id="Q5M4X6"/>
<dbReference type="STRING" id="264199.stu0737"/>
<dbReference type="DNASU" id="3164448"/>
<dbReference type="KEGG" id="stl:stu0737"/>
<dbReference type="PATRIC" id="fig|264199.4.peg.744"/>
<dbReference type="eggNOG" id="COG1799">
    <property type="taxonomic scope" value="Bacteria"/>
</dbReference>
<dbReference type="HOGENOM" id="CLU_078499_2_0_9"/>
<dbReference type="Proteomes" id="UP000001170">
    <property type="component" value="Chromosome"/>
</dbReference>
<dbReference type="GO" id="GO:0005737">
    <property type="term" value="C:cytoplasm"/>
    <property type="evidence" value="ECO:0007669"/>
    <property type="project" value="UniProtKB-SubCell"/>
</dbReference>
<dbReference type="GO" id="GO:0000917">
    <property type="term" value="P:division septum assembly"/>
    <property type="evidence" value="ECO:0007669"/>
    <property type="project" value="UniProtKB-KW"/>
</dbReference>
<dbReference type="GO" id="GO:0043093">
    <property type="term" value="P:FtsZ-dependent cytokinesis"/>
    <property type="evidence" value="ECO:0007669"/>
    <property type="project" value="UniProtKB-UniRule"/>
</dbReference>
<dbReference type="Gene3D" id="3.30.110.150">
    <property type="entry name" value="SepF-like protein"/>
    <property type="match status" value="1"/>
</dbReference>
<dbReference type="HAMAP" id="MF_01197">
    <property type="entry name" value="SepF"/>
    <property type="match status" value="1"/>
</dbReference>
<dbReference type="InterPro" id="IPR023052">
    <property type="entry name" value="Cell_div_SepF"/>
</dbReference>
<dbReference type="InterPro" id="IPR007561">
    <property type="entry name" value="Cell_div_SepF/SepF-rel"/>
</dbReference>
<dbReference type="InterPro" id="IPR038594">
    <property type="entry name" value="SepF-like_sf"/>
</dbReference>
<dbReference type="PANTHER" id="PTHR35798">
    <property type="entry name" value="CELL DIVISION PROTEIN SEPF"/>
    <property type="match status" value="1"/>
</dbReference>
<dbReference type="PANTHER" id="PTHR35798:SF1">
    <property type="entry name" value="CELL DIVISION PROTEIN SEPF"/>
    <property type="match status" value="1"/>
</dbReference>
<dbReference type="Pfam" id="PF04472">
    <property type="entry name" value="SepF"/>
    <property type="match status" value="1"/>
</dbReference>
<sequence>MAIKDAIEKIVSYFDADEVTDHEDVAKERPVKVQKTEQTPSQQQRKPERPQETVPPRRQHIKSDVQETQVLRSLSLSRSQVNQGSQQMNTTKTTIAIKYPKKYEDAQEIVELLIENECVLIDFQYMLEAQARRCLDFIDGASKVLTGNLQKVGSSMYLLTPINVVVDIEEIGLSHGNQESTFDFDMKRR</sequence>
<gene>
    <name evidence="1" type="primary">sepF</name>
    <name type="ordered locus">stu0737</name>
</gene>
<accession>Q5M4X6</accession>
<keyword id="KW-0131">Cell cycle</keyword>
<keyword id="KW-0132">Cell division</keyword>
<keyword id="KW-0963">Cytoplasm</keyword>
<keyword id="KW-1185">Reference proteome</keyword>
<keyword id="KW-0717">Septation</keyword>
<reference key="1">
    <citation type="journal article" date="2004" name="Nat. Biotechnol.">
        <title>Complete sequence and comparative genome analysis of the dairy bacterium Streptococcus thermophilus.</title>
        <authorList>
            <person name="Bolotin A."/>
            <person name="Quinquis B."/>
            <person name="Renault P."/>
            <person name="Sorokin A."/>
            <person name="Ehrlich S.D."/>
            <person name="Kulakauskas S."/>
            <person name="Lapidus A."/>
            <person name="Goltsman E."/>
            <person name="Mazur M."/>
            <person name="Pusch G.D."/>
            <person name="Fonstein M."/>
            <person name="Overbeek R."/>
            <person name="Kyprides N."/>
            <person name="Purnelle B."/>
            <person name="Prozzi D."/>
            <person name="Ngui K."/>
            <person name="Masuy D."/>
            <person name="Hancy F."/>
            <person name="Burteau S."/>
            <person name="Boutry M."/>
            <person name="Delcour J."/>
            <person name="Goffeau A."/>
            <person name="Hols P."/>
        </authorList>
    </citation>
    <scope>NUCLEOTIDE SEQUENCE [LARGE SCALE GENOMIC DNA]</scope>
    <source>
        <strain>ATCC BAA-250 / LMG 18311</strain>
    </source>
</reference>
<name>SEPF_STRT2</name>
<comment type="function">
    <text evidence="1">Cell division protein that is part of the divisome complex and is recruited early to the Z-ring. Probably stimulates Z-ring formation, perhaps through the cross-linking of FtsZ protofilaments. Its function overlaps with FtsA.</text>
</comment>
<comment type="subunit">
    <text evidence="1">Homodimer. Interacts with FtsZ.</text>
</comment>
<comment type="subcellular location">
    <subcellularLocation>
        <location evidence="1">Cytoplasm</location>
    </subcellularLocation>
    <text evidence="1">Localizes to the division site, in a FtsZ-dependent manner.</text>
</comment>
<comment type="similarity">
    <text evidence="1">Belongs to the SepF family.</text>
</comment>
<protein>
    <recommendedName>
        <fullName evidence="1">Cell division protein SepF</fullName>
    </recommendedName>
</protein>
<organism>
    <name type="scientific">Streptococcus thermophilus (strain ATCC BAA-250 / LMG 18311)</name>
    <dbReference type="NCBI Taxonomy" id="264199"/>
    <lineage>
        <taxon>Bacteria</taxon>
        <taxon>Bacillati</taxon>
        <taxon>Bacillota</taxon>
        <taxon>Bacilli</taxon>
        <taxon>Lactobacillales</taxon>
        <taxon>Streptococcaceae</taxon>
        <taxon>Streptococcus</taxon>
    </lineage>
</organism>
<feature type="chain" id="PRO_0000334112" description="Cell division protein SepF">
    <location>
        <begin position="1"/>
        <end position="189"/>
    </location>
</feature>
<feature type="region of interest" description="Disordered" evidence="2">
    <location>
        <begin position="18"/>
        <end position="64"/>
    </location>
</feature>
<feature type="compositionally biased region" description="Basic and acidic residues" evidence="2">
    <location>
        <begin position="22"/>
        <end position="35"/>
    </location>
</feature>